<evidence type="ECO:0000250" key="1">
    <source>
        <dbReference type="UniProtKB" id="P0DPI0"/>
    </source>
</evidence>
<evidence type="ECO:0000250" key="2">
    <source>
        <dbReference type="UniProtKB" id="P10844"/>
    </source>
</evidence>
<evidence type="ECO:0000255" key="3">
    <source>
        <dbReference type="PROSITE-ProRule" id="PRU10095"/>
    </source>
</evidence>
<evidence type="ECO:0000269" key="4">
    <source>
    </source>
</evidence>
<evidence type="ECO:0000269" key="5">
    <source>
    </source>
</evidence>
<evidence type="ECO:0000269" key="6">
    <source>
    </source>
</evidence>
<evidence type="ECO:0000305" key="7"/>
<proteinExistence type="evidence at protein level"/>
<accession>B1INP5</accession>
<geneLocation type="plasmid">
    <name>pCLD</name>
</geneLocation>
<reference key="1">
    <citation type="journal article" date="2007" name="PLoS ONE">
        <title>Analysis of the neurotoxin complex genes in Clostridium botulinum A1-A4 and B1 strains: BoNT/A3, /Ba4 and /B1 clusters are located within plasmids.</title>
        <authorList>
            <person name="Smith T.J."/>
            <person name="Hill K.K."/>
            <person name="Foley B.T."/>
            <person name="Detter J.C."/>
            <person name="Munk A.C."/>
            <person name="Bruce D.C."/>
            <person name="Doggett N.A."/>
            <person name="Smith L.A."/>
            <person name="Marks J.D."/>
            <person name="Xie G."/>
            <person name="Brettin T.S."/>
        </authorList>
    </citation>
    <scope>NUCLEOTIDE SEQUENCE [LARGE SCALE GENOMIC DNA]</scope>
    <source>
        <strain>Okra / Type B1</strain>
    </source>
</reference>
<reference key="2">
    <citation type="journal article" date="1985" name="Arch. Biochem. Biophys.">
        <title>Partial amino acid sequences of botulinum neurotoxins types B and E.</title>
        <authorList>
            <person name="Schmidt J.J."/>
            <person name="Sathyamoorthy V."/>
            <person name="Dasgupta B.R."/>
        </authorList>
    </citation>
    <scope>PROTEIN SEQUENCE OF 2-17 AND 442-459</scope>
    <source>
        <strain>Okra / Type B1</strain>
    </source>
</reference>
<reference key="3">
    <citation type="journal article" date="1985" name="J. Biol. Chem.">
        <title>Separation, purification, partial characterization and comparison of the heavy and light chains of botulinum neurotoxin types A, B, and E.</title>
        <authorList>
            <person name="Sathyamoorthy V."/>
            <person name="DasGupta B.R."/>
        </authorList>
    </citation>
    <scope>RELEASED AS SINGLE CHAIN</scope>
    <source>
        <strain>Okra / Type B1</strain>
    </source>
</reference>
<reference key="4">
    <citation type="journal article" date="1992" name="J. Infect. Dis.">
        <title>Clinical and laboratory comparison of botulism from toxin types A, B, and E in the United States, 1975-1988.</title>
        <authorList>
            <person name="Woodruff B.A."/>
            <person name="Griffin P.M."/>
            <person name="McCroskey L.M."/>
            <person name="Smart J.F."/>
            <person name="Wainwright R.B."/>
            <person name="Bryant R.G."/>
            <person name="Hutwagner L.C."/>
            <person name="Hatheway C.L."/>
        </authorList>
    </citation>
    <scope>HOST RANGE</scope>
    <scope>EPIDEMIOLOGY</scope>
</reference>
<comment type="function">
    <molecule>Botulinum neurotoxin type B</molecule>
    <text evidence="2">Botulinum toxin causes flaccid paralysis by inhibiting neurotransmitter (acetylcholine) release from the presynaptic membranes of nerve terminals of eukaryotic host skeletal and autonomic nervous system, with frequent heart or respiratory failure. Precursor of botulinum neurotoxin B which has 2 coreceptors; complex polysialylated gangliosides found on neural tissue and specific membrane-anchored proteins found in synaptic vesicles. Receptor proteins are exposed on host presynaptic cell membrane during neurotransmitter release, when the toxin heavy chain (HC) binds to them. Upon synaptic vesicle recycling the toxin is taken up via the endocytic pathway. When the pH of the toxin-containing endosome drops a structural rearrangement occurs so that the N-terminus of the HC forms pores that allows the light chain (LC) to translocate into the cytosol. Once in the cytosol the disulfide bond linking the 2 subunits is reduced and LC cleaves its target protein on synaptic vesicles, preventing their fusion with the cytoplasmic membrane and thus neurotransmitter release (By similarity).</text>
</comment>
<comment type="function">
    <molecule>Botulinum neurotoxin B light chain</molecule>
    <text evidence="2">Has proteolytic activity. After translocation into the eukaryotic host cytosol, LC hydrolyzes the '76-Gln-|-Phe-77' bond in synaptobrevin-2/VAMP2, blocking neurotransmitter release (By similarity).</text>
</comment>
<comment type="function">
    <molecule>Botulinum neurotoxin B heavy chain</molecule>
    <text evidence="2">Responsible for host epithelial cell transcytosis, host nerve cell targeting and translocation of light chain (LC) into host cytosol. Composed of 3 subdomains; the translocation domain (TD), and N-terminus and C-terminus of the receptor-binding domain (RBD). The RBD is responsible for the adherence of the toxin to the cell surface. It simultaneously recognizes 2 coreceptors; polysialated gangliosides and host synaptotagmin-1 and -2 (SYT1 and SYT2) which bind simultaneously to adjacent but separate sites at the tip of the HC. The N-terminus of the TD wraps an extended belt around the perimeter of the LC, protecting Zn(2+) in the active site; it may also prevent premature LC dissociation from the translocation channel and protect toxin prior to translocation (By similarity). The TD inserts into synaptic vesicle membrane to allow translocation into the host cytosol (By similarity).</text>
</comment>
<comment type="catalytic activity">
    <reaction evidence="2">
        <text>Limited hydrolysis of proteins of the neuroexocytosis apparatus, synaptobrevins, SNAP25 or syntaxin. No detected action on small molecule substrates.</text>
        <dbReference type="EC" id="3.4.24.69"/>
    </reaction>
</comment>
<comment type="cofactor">
    <cofactor evidence="2">
        <name>Zn(2+)</name>
        <dbReference type="ChEBI" id="CHEBI:29105"/>
    </cofactor>
    <text evidence="2">Binds 1 zinc ion per subunit (By similarity).</text>
</comment>
<comment type="subunit">
    <text evidence="2">Heterodimer; disulfide-linked heterodimer of a light chain (LC) and a heavy chain (HC). Interacts with host synaptic vesicle proteins synaptotagmin-1 and -2 which serve as coreceptors with complex gangliosides (By similarity).</text>
</comment>
<comment type="subcellular location">
    <molecule>Botulinum neurotoxin type B</molecule>
    <subcellularLocation>
        <location evidence="2">Secreted</location>
    </subcellularLocation>
    <subcellularLocation>
        <location evidence="2">Host synapse</location>
        <location evidence="2">Host presynaptic cell membrane</location>
    </subcellularLocation>
</comment>
<comment type="subcellular location">
    <molecule>Botulinum neurotoxin B light chain</molecule>
    <subcellularLocation>
        <location evidence="2">Secreted</location>
    </subcellularLocation>
    <subcellularLocation>
        <location evidence="2">Host cytoplasm</location>
        <location evidence="2">Host cytosol</location>
    </subcellularLocation>
</comment>
<comment type="subcellular location">
    <molecule>Botulinum neurotoxin B heavy chain</molecule>
    <subcellularLocation>
        <location evidence="2">Secreted</location>
    </subcellularLocation>
    <subcellularLocation>
        <location evidence="2">Host synapse</location>
        <location evidence="2">Host presynaptic cell membrane</location>
    </subcellularLocation>
    <subcellularLocation>
        <location evidence="1">Host cytoplasmic vesicle</location>
        <location evidence="1">Host secretory vesicle</location>
        <location evidence="1">Host synaptic vesicle membrane</location>
        <topology evidence="7">Multi-pass membrane protein</topology>
    </subcellularLocation>
</comment>
<comment type="domain">
    <text evidence="2">Botulinum neurotoxin A light chain: Has protease activity.</text>
</comment>
<comment type="domain">
    <text evidence="1 2">Botulinum neurotoxin A heavy chain: Has 3 functional domains; the translocation domain (TD) and the receptor-binding domain (RBD) which is further subdivided into N- and C-terminal domains (N-RBD and C-RBD). The N-terminus of the TD wraps an extended belt around the perimeter of the LC, protecting Zn(2+) in the active site and may be a pseudosubstrate inhibitor which serves as an intramolecular chaperone for the LC prior to its translocation into the host cytosol. The RBD binds transiently exposed coreceptors on the host presynaptic cell membrane.</text>
</comment>
<comment type="miscellaneous">
    <text>There are seven antigenically distinct forms of botulinum neurotoxin: Types A, B, C, D, E, F, and G; new subtypes are quite frequent.</text>
</comment>
<comment type="miscellaneous">
    <text evidence="1">Botulism poisoning is usually food-borne, either by ingesting toxin or bacterial-contaminated food, or less frequently by inhalation poisoning. In both cases the neurotoxin binds to the apical surface of epithelial cells in the gut or airway. Toxin undergoes receptor-mediated endocytosis (using a different receptor than on target nerve cells), transcytosis across the epithelial cells and release into the general circulation. Once in the general circulation it binds to its target cells.</text>
</comment>
<comment type="miscellaneous">
    <text evidence="4">Types A, B and E are the most frequent cause of adult human foodborne botulism; type A is the most severe, while type E has the shortest incubation period (PubMed:1431246).</text>
</comment>
<comment type="miscellaneous">
    <text evidence="6">Neurotoxin type B is released from bacteria mostly as a single chain and cleaved by host proteases into the active dichain (PubMed:4030755).</text>
</comment>
<comment type="similarity">
    <text evidence="7">Belongs to the peptidase M27 family.</text>
</comment>
<comment type="online information" name="BotDB - A Database Resource for Clostridial Neurotoxins">
    <link uri="https://botdb.abcc.ncifcrf.gov/"/>
</comment>
<name>BXB_CLOBK</name>
<organism>
    <name type="scientific">Clostridium botulinum (strain Okra / Type B1)</name>
    <dbReference type="NCBI Taxonomy" id="498213"/>
    <lineage>
        <taxon>Bacteria</taxon>
        <taxon>Bacillati</taxon>
        <taxon>Bacillota</taxon>
        <taxon>Clostridia</taxon>
        <taxon>Eubacteriales</taxon>
        <taxon>Clostridiaceae</taxon>
        <taxon>Clostridium</taxon>
    </lineage>
</organism>
<sequence>MPVTINNFNYNDPIDNNNIIMMEPPFARGTGRYYKAFKITDRIWIIPERYTFGYKPEDFNKSSGIFNRDVCEYYDPDYLNTNDKKNIFLQTMIKLFNRIKSKPLGEKLLEMIINGIPYLGDRRVPLEEFNTNIASVTVNKLISNPGEVERKKGIFANLIIFGPGPVLNENETIDIGIQNHFASREGFGGIMQMKFCPEYVSVFNNVQENKGASIFNRRGYFSDPALILMHELIHVLHGLYGIKVDDLPIVPNEKKFFMQSTDAIQAEELYTFGGQDPSIITPSTDKSIYDKVLQNFRGIVDRLNKVLVCISDPNININIYKNKFKDKYKFVEDSEGKYSIDVESFDKLYKSLMFGFTETNIAENYKIKTRASYFSDSLPPVKIKNLLDNEIYTIEEGFNISDKDMEKEYRGQNKAINKQAYEEISKEHLAVYKIQMCKSVKAPGICIDVDNEDLFFIADKNSFSDDLSKNERIEYNTQSNYIENDFPINELILDTDLISKIELPSENTESLTDFNVDVPVYEKQPAIKKIFTDENTIFQYLYSQTFPLDIRDISLTSSFDDALLFSNKVYSFFSMDYIKTANKVVEAGLFAGWVKQIVNDFVIEANKSNTMDKIADISLIVPYIGLALNVGNETAKGNFENAFEIAGASILLEFIPELLIPVVGAFLLESYIDNKNKIIKTIDNALTKRNEKWSDMYGLIVAQWLSTVNTQFYTIKEGMYKALNYQAQALEEIIKYRYNIYSEKEKSNINIDFNDINSKLNEGINQAIDNINNFINGCSVSYLMKKMIPLAVEKLLDFDNTLKKNLLNYIDENKLYLIGSAEYEKSKVNKYLKTIMPFDLSIYTNDTILIEMFNKYNSEILNNIILNLRYKDNNLIDLSGYGAKVEVYDGVELNDKNQFKLTSSANSKIRVTQNQNIIFNSVFLDFSVSFWIRIPKYKNDGIQNYIHNEYTIINCMKNNSGWKISIRGNRIIWTLIDINGKTKSVFFEYNIREDISEYINRWFFVTITNNLNNAKIYINGKLESNTDIKDIREVIANGEIIFKLDGDIDRTQFIWMKYFSIFNTELSQSNIEERYKIQSYSEYLKDFWGNPLMYNKEYYMFNAGNKNSYIKLKKDSPVGEILTRSKYNQNSKYINYRDLYIGEKFIIRRKSNSQSINDDIVRKEDYIYLDFFNLNQEWRVYTYKYFKKEEEKLFLAPISDSDEFYNTIQIKEYDEQPTYSCQLLFKKDEESTDEIGLIGIHRFYESGIVFEEYKDYFCISKWYLKEVKRKPYNLKLGCNWQFIPKDEGWTE</sequence>
<protein>
    <recommendedName>
        <fullName>Botulinum neurotoxin type B</fullName>
        <shortName>BoNT/B</shortName>
    </recommendedName>
    <alternativeName>
        <fullName>Bontoxilysin-B</fullName>
    </alternativeName>
    <component>
        <recommendedName>
            <fullName>Botulinum neurotoxin B light chain</fullName>
            <shortName>LC</shortName>
            <ecNumber>3.4.24.69</ecNumber>
        </recommendedName>
    </component>
    <component>
        <recommendedName>
            <fullName>Botulinum neurotoxin B heavy chain</fullName>
            <shortName>HC</shortName>
        </recommendedName>
    </component>
</protein>
<gene>
    <name type="primary">botB</name>
    <name type="ordered locus">CLD_A0068</name>
</gene>
<dbReference type="EC" id="3.4.24.69"/>
<dbReference type="EMBL" id="CP000940">
    <property type="protein sequence ID" value="ACA46990.1"/>
    <property type="molecule type" value="Genomic_DNA"/>
</dbReference>
<dbReference type="PIR" id="A48940">
    <property type="entry name" value="A48940"/>
</dbReference>
<dbReference type="RefSeq" id="WP_012291519.1">
    <property type="nucleotide sequence ID" value="NC_010379.1"/>
</dbReference>
<dbReference type="SMR" id="B1INP5"/>
<dbReference type="DIP" id="DIP-61160N"/>
<dbReference type="IntAct" id="B1INP5">
    <property type="interactions" value="1"/>
</dbReference>
<dbReference type="MEROPS" id="M27.002"/>
<dbReference type="ABCD" id="B1INP5">
    <property type="antibodies" value="21 sequenced antibodies"/>
</dbReference>
<dbReference type="KEGG" id="cbb:CLD_A0068"/>
<dbReference type="HOGENOM" id="CLU_262205_0_0_9"/>
<dbReference type="BRENDA" id="3.4.24.69">
    <property type="organism ID" value="1462"/>
</dbReference>
<dbReference type="Proteomes" id="UP000008541">
    <property type="component" value="Plasmid pCLD"/>
</dbReference>
<dbReference type="GO" id="GO:0005576">
    <property type="term" value="C:extracellular region"/>
    <property type="evidence" value="ECO:0007669"/>
    <property type="project" value="UniProtKB-SubCell"/>
</dbReference>
<dbReference type="GO" id="GO:0044161">
    <property type="term" value="C:host cell cytoplasmic vesicle"/>
    <property type="evidence" value="ECO:0007669"/>
    <property type="project" value="UniProtKB-SubCell"/>
</dbReference>
<dbReference type="GO" id="GO:0044164">
    <property type="term" value="C:host cell cytosol"/>
    <property type="evidence" value="ECO:0007669"/>
    <property type="project" value="UniProtKB-SubCell"/>
</dbReference>
<dbReference type="GO" id="GO:0020002">
    <property type="term" value="C:host cell plasma membrane"/>
    <property type="evidence" value="ECO:0007669"/>
    <property type="project" value="UniProtKB-KW"/>
</dbReference>
<dbReference type="GO" id="GO:0044231">
    <property type="term" value="C:host cell presynaptic membrane"/>
    <property type="evidence" value="ECO:0007669"/>
    <property type="project" value="UniProtKB-SubCell"/>
</dbReference>
<dbReference type="GO" id="GO:0016020">
    <property type="term" value="C:membrane"/>
    <property type="evidence" value="ECO:0007669"/>
    <property type="project" value="UniProtKB-KW"/>
</dbReference>
<dbReference type="GO" id="GO:0008289">
    <property type="term" value="F:lipid binding"/>
    <property type="evidence" value="ECO:0007669"/>
    <property type="project" value="UniProtKB-KW"/>
</dbReference>
<dbReference type="GO" id="GO:0004222">
    <property type="term" value="F:metalloendopeptidase activity"/>
    <property type="evidence" value="ECO:0007669"/>
    <property type="project" value="UniProtKB-EC"/>
</dbReference>
<dbReference type="GO" id="GO:0008320">
    <property type="term" value="F:protein transmembrane transporter activity"/>
    <property type="evidence" value="ECO:0007669"/>
    <property type="project" value="InterPro"/>
</dbReference>
<dbReference type="GO" id="GO:0090729">
    <property type="term" value="F:toxin activity"/>
    <property type="evidence" value="ECO:0007669"/>
    <property type="project" value="UniProtKB-KW"/>
</dbReference>
<dbReference type="GO" id="GO:0008270">
    <property type="term" value="F:zinc ion binding"/>
    <property type="evidence" value="ECO:0007669"/>
    <property type="project" value="InterPro"/>
</dbReference>
<dbReference type="GO" id="GO:0006508">
    <property type="term" value="P:proteolysis"/>
    <property type="evidence" value="ECO:0007669"/>
    <property type="project" value="UniProtKB-KW"/>
</dbReference>
<dbReference type="CDD" id="cd23389">
    <property type="entry name" value="Toxin_R_bind_C_BoNTB"/>
    <property type="match status" value="1"/>
</dbReference>
<dbReference type="FunFam" id="2.60.120.200:FF:000184">
    <property type="entry name" value="Botulinum neurotoxin type A"/>
    <property type="match status" value="1"/>
</dbReference>
<dbReference type="FunFam" id="3.90.1240.10:FF:000001">
    <property type="entry name" value="Botulinum neurotoxin type B"/>
    <property type="match status" value="1"/>
</dbReference>
<dbReference type="Gene3D" id="2.60.120.200">
    <property type="match status" value="1"/>
</dbReference>
<dbReference type="Gene3D" id="2.80.10.50">
    <property type="match status" value="1"/>
</dbReference>
<dbReference type="Gene3D" id="1.20.1120.10">
    <property type="entry name" value="Clostridium botulinum neurotoxin b, 'coiled-coil' domain"/>
    <property type="match status" value="1"/>
</dbReference>
<dbReference type="Gene3D" id="3.90.1240.10">
    <property type="entry name" value="Metalloproteases ('zincins'), catalytic domain like"/>
    <property type="match status" value="1"/>
</dbReference>
<dbReference type="InterPro" id="IPR000395">
    <property type="entry name" value="Bot/tetX_LC"/>
</dbReference>
<dbReference type="InterPro" id="IPR036248">
    <property type="entry name" value="Clostridium_toxin_transloc"/>
</dbReference>
<dbReference type="InterPro" id="IPR013320">
    <property type="entry name" value="ConA-like_dom_sf"/>
</dbReference>
<dbReference type="InterPro" id="IPR011065">
    <property type="entry name" value="Kunitz_inhibitor_STI-like_sf"/>
</dbReference>
<dbReference type="InterPro" id="IPR013104">
    <property type="entry name" value="Toxin_rcpt-bd_C"/>
</dbReference>
<dbReference type="InterPro" id="IPR012928">
    <property type="entry name" value="Toxin_rcpt-bd_N"/>
</dbReference>
<dbReference type="InterPro" id="IPR012500">
    <property type="entry name" value="Toxin_trans"/>
</dbReference>
<dbReference type="Pfam" id="PF01742">
    <property type="entry name" value="Peptidase_M27"/>
    <property type="match status" value="1"/>
</dbReference>
<dbReference type="Pfam" id="PF07951">
    <property type="entry name" value="Toxin_R_bind_C"/>
    <property type="match status" value="1"/>
</dbReference>
<dbReference type="Pfam" id="PF07953">
    <property type="entry name" value="Toxin_R_bind_N"/>
    <property type="match status" value="1"/>
</dbReference>
<dbReference type="Pfam" id="PF07952">
    <property type="entry name" value="Toxin_trans"/>
    <property type="match status" value="1"/>
</dbReference>
<dbReference type="PRINTS" id="PR00760">
    <property type="entry name" value="BONTOXILYSIN"/>
</dbReference>
<dbReference type="SUPFAM" id="SSF58091">
    <property type="entry name" value="Clostridium neurotoxins, 'coiled-coil' domain"/>
    <property type="match status" value="1"/>
</dbReference>
<dbReference type="SUPFAM" id="SSF49899">
    <property type="entry name" value="Concanavalin A-like lectins/glucanases"/>
    <property type="match status" value="1"/>
</dbReference>
<dbReference type="SUPFAM" id="SSF55486">
    <property type="entry name" value="Metalloproteases ('zincins'), catalytic domain"/>
    <property type="match status" value="1"/>
</dbReference>
<dbReference type="SUPFAM" id="SSF50386">
    <property type="entry name" value="STI-like"/>
    <property type="match status" value="1"/>
</dbReference>
<dbReference type="PROSITE" id="PS00142">
    <property type="entry name" value="ZINC_PROTEASE"/>
    <property type="match status" value="1"/>
</dbReference>
<keyword id="KW-0903">Direct protein sequencing</keyword>
<keyword id="KW-1015">Disulfide bond</keyword>
<keyword id="KW-1032">Host cell membrane</keyword>
<keyword id="KW-1035">Host cytoplasm</keyword>
<keyword id="KW-1036">Host cytoplasmic vesicle</keyword>
<keyword id="KW-1043">Host membrane</keyword>
<keyword id="KW-1051">Host synapse</keyword>
<keyword id="KW-0378">Hydrolase</keyword>
<keyword id="KW-0446">Lipid-binding</keyword>
<keyword id="KW-0472">Membrane</keyword>
<keyword id="KW-0479">Metal-binding</keyword>
<keyword id="KW-0482">Metalloprotease</keyword>
<keyword id="KW-0528">Neurotoxin</keyword>
<keyword id="KW-0614">Plasmid</keyword>
<keyword id="KW-0645">Protease</keyword>
<keyword id="KW-0964">Secreted</keyword>
<keyword id="KW-0800">Toxin</keyword>
<keyword id="KW-0812">Transmembrane</keyword>
<keyword id="KW-0843">Virulence</keyword>
<keyword id="KW-0862">Zinc</keyword>
<feature type="initiator methionine" description="Removed" evidence="5">
    <location>
        <position position="1"/>
    </location>
</feature>
<feature type="chain" id="PRO_0000444919" description="Botulinum neurotoxin type B">
    <location>
        <begin position="2"/>
        <end position="1291"/>
    </location>
</feature>
<feature type="chain" id="PRO_0000337075" description="Botulinum neurotoxin B light chain">
    <location>
        <begin position="2"/>
        <end position="441"/>
    </location>
</feature>
<feature type="chain" id="PRO_0000337076" description="Botulinum neurotoxin B heavy chain">
    <location>
        <begin position="442"/>
        <end position="1291"/>
    </location>
</feature>
<feature type="region of interest" description="Translocation domain (TD)" evidence="1">
    <location>
        <begin position="442"/>
        <end position="857"/>
    </location>
</feature>
<feature type="region of interest" description="Belt" evidence="2">
    <location>
        <begin position="481"/>
        <end position="532"/>
    </location>
</feature>
<feature type="region of interest" description="N-terminus of receptor binding domain (N-RBD)" evidence="1">
    <location>
        <begin position="858"/>
        <end position="1079"/>
    </location>
</feature>
<feature type="region of interest" description="C-terminus of receptor binding domain (C-RBD)" evidence="1">
    <location>
        <begin position="1080"/>
        <end position="1291"/>
    </location>
</feature>
<feature type="short sequence motif" description="Host ganglioside-binding motif" evidence="2">
    <location>
        <begin position="1260"/>
        <end position="1263"/>
    </location>
</feature>
<feature type="active site" evidence="3">
    <location>
        <position position="231"/>
    </location>
</feature>
<feature type="binding site" evidence="2 3">
    <location>
        <position position="230"/>
    </location>
    <ligand>
        <name>Zn(2+)</name>
        <dbReference type="ChEBI" id="CHEBI:29105"/>
        <note>catalytic</note>
    </ligand>
</feature>
<feature type="binding site" evidence="2 3">
    <location>
        <position position="234"/>
    </location>
    <ligand>
        <name>Zn(2+)</name>
        <dbReference type="ChEBI" id="CHEBI:29105"/>
        <note>catalytic</note>
    </ligand>
</feature>
<feature type="binding site" evidence="2">
    <location>
        <position position="268"/>
    </location>
    <ligand>
        <name>Zn(2+)</name>
        <dbReference type="ChEBI" id="CHEBI:29105"/>
        <note>catalytic</note>
    </ligand>
</feature>
<feature type="disulfide bond" description="Interchain (between light and heavy chains)" evidence="2">
    <location>
        <begin position="437"/>
        <end position="446"/>
    </location>
</feature>